<reference key="1">
    <citation type="journal article" date="2009" name="Environ. Microbiol.">
        <title>The genome of Polaromonas naphthalenivorans strain CJ2, isolated from coal tar-contaminated sediment, reveals physiological and metabolic versatility and evolution through extensive horizontal gene transfer.</title>
        <authorList>
            <person name="Yagi J.M."/>
            <person name="Sims D."/>
            <person name="Brettin T."/>
            <person name="Bruce D."/>
            <person name="Madsen E.L."/>
        </authorList>
    </citation>
    <scope>NUCLEOTIDE SEQUENCE [LARGE SCALE GENOMIC DNA]</scope>
    <source>
        <strain>CJ2</strain>
    </source>
</reference>
<name>PROA_POLNA</name>
<feature type="chain" id="PRO_1000049975" description="Gamma-glutamyl phosphate reductase">
    <location>
        <begin position="1"/>
        <end position="430"/>
    </location>
</feature>
<dbReference type="EC" id="1.2.1.41" evidence="1"/>
<dbReference type="EMBL" id="CP000529">
    <property type="protein sequence ID" value="ABM39047.1"/>
    <property type="molecule type" value="Genomic_DNA"/>
</dbReference>
<dbReference type="RefSeq" id="WP_011803113.1">
    <property type="nucleotide sequence ID" value="NC_008781.1"/>
</dbReference>
<dbReference type="SMR" id="A1VTR9"/>
<dbReference type="STRING" id="365044.Pnap_3751"/>
<dbReference type="KEGG" id="pna:Pnap_3751"/>
<dbReference type="eggNOG" id="COG0014">
    <property type="taxonomic scope" value="Bacteria"/>
</dbReference>
<dbReference type="HOGENOM" id="CLU_030231_0_0_4"/>
<dbReference type="OrthoDB" id="9809970at2"/>
<dbReference type="UniPathway" id="UPA00098">
    <property type="reaction ID" value="UER00360"/>
</dbReference>
<dbReference type="Proteomes" id="UP000000644">
    <property type="component" value="Chromosome"/>
</dbReference>
<dbReference type="GO" id="GO:0005737">
    <property type="term" value="C:cytoplasm"/>
    <property type="evidence" value="ECO:0007669"/>
    <property type="project" value="UniProtKB-SubCell"/>
</dbReference>
<dbReference type="GO" id="GO:0004350">
    <property type="term" value="F:glutamate-5-semialdehyde dehydrogenase activity"/>
    <property type="evidence" value="ECO:0007669"/>
    <property type="project" value="UniProtKB-UniRule"/>
</dbReference>
<dbReference type="GO" id="GO:0050661">
    <property type="term" value="F:NADP binding"/>
    <property type="evidence" value="ECO:0007669"/>
    <property type="project" value="InterPro"/>
</dbReference>
<dbReference type="GO" id="GO:0055129">
    <property type="term" value="P:L-proline biosynthetic process"/>
    <property type="evidence" value="ECO:0007669"/>
    <property type="project" value="UniProtKB-UniRule"/>
</dbReference>
<dbReference type="CDD" id="cd07079">
    <property type="entry name" value="ALDH_F18-19_ProA-GPR"/>
    <property type="match status" value="1"/>
</dbReference>
<dbReference type="FunFam" id="3.40.309.10:FF:000006">
    <property type="entry name" value="Gamma-glutamyl phosphate reductase"/>
    <property type="match status" value="1"/>
</dbReference>
<dbReference type="Gene3D" id="3.40.605.10">
    <property type="entry name" value="Aldehyde Dehydrogenase, Chain A, domain 1"/>
    <property type="match status" value="1"/>
</dbReference>
<dbReference type="Gene3D" id="3.40.309.10">
    <property type="entry name" value="Aldehyde Dehydrogenase, Chain A, domain 2"/>
    <property type="match status" value="1"/>
</dbReference>
<dbReference type="HAMAP" id="MF_00412">
    <property type="entry name" value="ProA"/>
    <property type="match status" value="1"/>
</dbReference>
<dbReference type="InterPro" id="IPR016161">
    <property type="entry name" value="Ald_DH/histidinol_DH"/>
</dbReference>
<dbReference type="InterPro" id="IPR016163">
    <property type="entry name" value="Ald_DH_C"/>
</dbReference>
<dbReference type="InterPro" id="IPR016162">
    <property type="entry name" value="Ald_DH_N"/>
</dbReference>
<dbReference type="InterPro" id="IPR015590">
    <property type="entry name" value="Aldehyde_DH_dom"/>
</dbReference>
<dbReference type="InterPro" id="IPR020593">
    <property type="entry name" value="G-glutamylP_reductase_CS"/>
</dbReference>
<dbReference type="InterPro" id="IPR012134">
    <property type="entry name" value="Glu-5-SA_DH"/>
</dbReference>
<dbReference type="InterPro" id="IPR000965">
    <property type="entry name" value="GPR_dom"/>
</dbReference>
<dbReference type="NCBIfam" id="NF001221">
    <property type="entry name" value="PRK00197.1"/>
    <property type="match status" value="1"/>
</dbReference>
<dbReference type="NCBIfam" id="TIGR00407">
    <property type="entry name" value="proA"/>
    <property type="match status" value="1"/>
</dbReference>
<dbReference type="PANTHER" id="PTHR11063:SF8">
    <property type="entry name" value="DELTA-1-PYRROLINE-5-CARBOXYLATE SYNTHASE"/>
    <property type="match status" value="1"/>
</dbReference>
<dbReference type="PANTHER" id="PTHR11063">
    <property type="entry name" value="GLUTAMATE SEMIALDEHYDE DEHYDROGENASE"/>
    <property type="match status" value="1"/>
</dbReference>
<dbReference type="Pfam" id="PF00171">
    <property type="entry name" value="Aldedh"/>
    <property type="match status" value="2"/>
</dbReference>
<dbReference type="PIRSF" id="PIRSF000151">
    <property type="entry name" value="GPR"/>
    <property type="match status" value="1"/>
</dbReference>
<dbReference type="SUPFAM" id="SSF53720">
    <property type="entry name" value="ALDH-like"/>
    <property type="match status" value="1"/>
</dbReference>
<dbReference type="PROSITE" id="PS01223">
    <property type="entry name" value="PROA"/>
    <property type="match status" value="1"/>
</dbReference>
<comment type="function">
    <text evidence="1">Catalyzes the NADPH-dependent reduction of L-glutamate 5-phosphate into L-glutamate 5-semialdehyde and phosphate. The product spontaneously undergoes cyclization to form 1-pyrroline-5-carboxylate.</text>
</comment>
<comment type="catalytic activity">
    <reaction evidence="1">
        <text>L-glutamate 5-semialdehyde + phosphate + NADP(+) = L-glutamyl 5-phosphate + NADPH + H(+)</text>
        <dbReference type="Rhea" id="RHEA:19541"/>
        <dbReference type="ChEBI" id="CHEBI:15378"/>
        <dbReference type="ChEBI" id="CHEBI:43474"/>
        <dbReference type="ChEBI" id="CHEBI:57783"/>
        <dbReference type="ChEBI" id="CHEBI:58066"/>
        <dbReference type="ChEBI" id="CHEBI:58274"/>
        <dbReference type="ChEBI" id="CHEBI:58349"/>
        <dbReference type="EC" id="1.2.1.41"/>
    </reaction>
</comment>
<comment type="pathway">
    <text evidence="1">Amino-acid biosynthesis; L-proline biosynthesis; L-glutamate 5-semialdehyde from L-glutamate: step 2/2.</text>
</comment>
<comment type="subcellular location">
    <subcellularLocation>
        <location evidence="1">Cytoplasm</location>
    </subcellularLocation>
</comment>
<comment type="similarity">
    <text evidence="1">Belongs to the gamma-glutamyl phosphate reductase family.</text>
</comment>
<protein>
    <recommendedName>
        <fullName evidence="1">Gamma-glutamyl phosphate reductase</fullName>
        <shortName evidence="1">GPR</shortName>
        <ecNumber evidence="1">1.2.1.41</ecNumber>
    </recommendedName>
    <alternativeName>
        <fullName evidence="1">Glutamate-5-semialdehyde dehydrogenase</fullName>
    </alternativeName>
    <alternativeName>
        <fullName evidence="1">Glutamyl-gamma-semialdehyde dehydrogenase</fullName>
        <shortName evidence="1">GSA dehydrogenase</shortName>
    </alternativeName>
</protein>
<proteinExistence type="inferred from homology"/>
<accession>A1VTR9</accession>
<keyword id="KW-0028">Amino-acid biosynthesis</keyword>
<keyword id="KW-0963">Cytoplasm</keyword>
<keyword id="KW-0521">NADP</keyword>
<keyword id="KW-0560">Oxidoreductase</keyword>
<keyword id="KW-0641">Proline biosynthesis</keyword>
<keyword id="KW-1185">Reference proteome</keyword>
<evidence type="ECO:0000255" key="1">
    <source>
        <dbReference type="HAMAP-Rule" id="MF_00412"/>
    </source>
</evidence>
<organism>
    <name type="scientific">Polaromonas naphthalenivorans (strain CJ2)</name>
    <dbReference type="NCBI Taxonomy" id="365044"/>
    <lineage>
        <taxon>Bacteria</taxon>
        <taxon>Pseudomonadati</taxon>
        <taxon>Pseudomonadota</taxon>
        <taxon>Betaproteobacteria</taxon>
        <taxon>Burkholderiales</taxon>
        <taxon>Comamonadaceae</taxon>
        <taxon>Polaromonas</taxon>
    </lineage>
</organism>
<sequence>MNALNIADYMQTLGLQAKTASAQVARAPAAIKNRALKNLAALLRQNLGSLQAANQRDLERASAAGLAGPLLDRLKLSAKDLETVALGCEQLAAMPDVIGEIIGMKEQPSGIRVGQMRVPIGVFGMIYESRPNVTIEAASLAIKSGNACILRGGSEAIESNKALAALVRQALEQAGLPADAVQLVGTTDREAVGQLIAMPQYVDVIIPRGGKGLIERISRDAKVPVIKHLDGNCHVYVDDPCDIAMAVKIADNAKTQKYSPCNATEGLLVARGVADAFLPQIAAIYAAKGVEMRCDEAAAHILHAHPAIESIANIVPASEQDWYEEYLAPVISIKVVSGVEEAIAHINRYSSHHTDAILTRDHMHAQQFLREVDSASVMVNASTRFADGFEFGLGAEIGISTDKFHARGPVGIEGLTSLKYVVLGQGEVRT</sequence>
<gene>
    <name evidence="1" type="primary">proA</name>
    <name type="ordered locus">Pnap_3751</name>
</gene>